<dbReference type="EMBL" id="CP000569">
    <property type="protein sequence ID" value="ABN74856.1"/>
    <property type="molecule type" value="Genomic_DNA"/>
</dbReference>
<dbReference type="RefSeq" id="WP_005602614.1">
    <property type="nucleotide sequence ID" value="NC_009053.1"/>
</dbReference>
<dbReference type="SMR" id="A3N370"/>
<dbReference type="STRING" id="416269.APL_1772"/>
<dbReference type="EnsemblBacteria" id="ABN74856">
    <property type="protein sequence ID" value="ABN74856"/>
    <property type="gene ID" value="APL_1772"/>
</dbReference>
<dbReference type="KEGG" id="apl:APL_1772"/>
<dbReference type="eggNOG" id="COG0199">
    <property type="taxonomic scope" value="Bacteria"/>
</dbReference>
<dbReference type="HOGENOM" id="CLU_139869_0_1_6"/>
<dbReference type="Proteomes" id="UP000001432">
    <property type="component" value="Chromosome"/>
</dbReference>
<dbReference type="GO" id="GO:0005737">
    <property type="term" value="C:cytoplasm"/>
    <property type="evidence" value="ECO:0007669"/>
    <property type="project" value="UniProtKB-ARBA"/>
</dbReference>
<dbReference type="GO" id="GO:0015935">
    <property type="term" value="C:small ribosomal subunit"/>
    <property type="evidence" value="ECO:0007669"/>
    <property type="project" value="TreeGrafter"/>
</dbReference>
<dbReference type="GO" id="GO:0019843">
    <property type="term" value="F:rRNA binding"/>
    <property type="evidence" value="ECO:0007669"/>
    <property type="project" value="UniProtKB-UniRule"/>
</dbReference>
<dbReference type="GO" id="GO:0003735">
    <property type="term" value="F:structural constituent of ribosome"/>
    <property type="evidence" value="ECO:0007669"/>
    <property type="project" value="InterPro"/>
</dbReference>
<dbReference type="GO" id="GO:0006412">
    <property type="term" value="P:translation"/>
    <property type="evidence" value="ECO:0007669"/>
    <property type="project" value="UniProtKB-UniRule"/>
</dbReference>
<dbReference type="FunFam" id="1.10.287.1480:FF:000001">
    <property type="entry name" value="30S ribosomal protein S14"/>
    <property type="match status" value="1"/>
</dbReference>
<dbReference type="Gene3D" id="1.10.287.1480">
    <property type="match status" value="1"/>
</dbReference>
<dbReference type="HAMAP" id="MF_00537">
    <property type="entry name" value="Ribosomal_uS14_1"/>
    <property type="match status" value="1"/>
</dbReference>
<dbReference type="InterPro" id="IPR001209">
    <property type="entry name" value="Ribosomal_uS14"/>
</dbReference>
<dbReference type="InterPro" id="IPR023036">
    <property type="entry name" value="Ribosomal_uS14_bac/plastid"/>
</dbReference>
<dbReference type="InterPro" id="IPR018271">
    <property type="entry name" value="Ribosomal_uS14_CS"/>
</dbReference>
<dbReference type="NCBIfam" id="NF006477">
    <property type="entry name" value="PRK08881.1"/>
    <property type="match status" value="1"/>
</dbReference>
<dbReference type="PANTHER" id="PTHR19836">
    <property type="entry name" value="30S RIBOSOMAL PROTEIN S14"/>
    <property type="match status" value="1"/>
</dbReference>
<dbReference type="PANTHER" id="PTHR19836:SF19">
    <property type="entry name" value="SMALL RIBOSOMAL SUBUNIT PROTEIN US14M"/>
    <property type="match status" value="1"/>
</dbReference>
<dbReference type="Pfam" id="PF00253">
    <property type="entry name" value="Ribosomal_S14"/>
    <property type="match status" value="1"/>
</dbReference>
<dbReference type="SUPFAM" id="SSF57716">
    <property type="entry name" value="Glucocorticoid receptor-like (DNA-binding domain)"/>
    <property type="match status" value="1"/>
</dbReference>
<dbReference type="PROSITE" id="PS00527">
    <property type="entry name" value="RIBOSOMAL_S14"/>
    <property type="match status" value="1"/>
</dbReference>
<evidence type="ECO:0000255" key="1">
    <source>
        <dbReference type="HAMAP-Rule" id="MF_00537"/>
    </source>
</evidence>
<evidence type="ECO:0000305" key="2"/>
<accession>A3N370</accession>
<feature type="chain" id="PRO_1000128282" description="Small ribosomal subunit protein uS14">
    <location>
        <begin position="1"/>
        <end position="101"/>
    </location>
</feature>
<reference key="1">
    <citation type="journal article" date="2008" name="J. Bacteriol.">
        <title>The complete genome sequence of Actinobacillus pleuropneumoniae L20 (serotype 5b).</title>
        <authorList>
            <person name="Foote S.J."/>
            <person name="Bosse J.T."/>
            <person name="Bouevitch A.B."/>
            <person name="Langford P.R."/>
            <person name="Young N.M."/>
            <person name="Nash J.H.E."/>
        </authorList>
    </citation>
    <scope>NUCLEOTIDE SEQUENCE [LARGE SCALE GENOMIC DNA]</scope>
    <source>
        <strain>L20</strain>
    </source>
</reference>
<protein>
    <recommendedName>
        <fullName evidence="1">Small ribosomal subunit protein uS14</fullName>
    </recommendedName>
    <alternativeName>
        <fullName evidence="2">30S ribosomal protein S14</fullName>
    </alternativeName>
</protein>
<organism>
    <name type="scientific">Actinobacillus pleuropneumoniae serotype 5b (strain L20)</name>
    <dbReference type="NCBI Taxonomy" id="416269"/>
    <lineage>
        <taxon>Bacteria</taxon>
        <taxon>Pseudomonadati</taxon>
        <taxon>Pseudomonadota</taxon>
        <taxon>Gammaproteobacteria</taxon>
        <taxon>Pasteurellales</taxon>
        <taxon>Pasteurellaceae</taxon>
        <taxon>Actinobacillus</taxon>
    </lineage>
</organism>
<gene>
    <name evidence="1" type="primary">rpsN</name>
    <name type="ordered locus">APL_1772</name>
</gene>
<keyword id="KW-1185">Reference proteome</keyword>
<keyword id="KW-0687">Ribonucleoprotein</keyword>
<keyword id="KW-0689">Ribosomal protein</keyword>
<keyword id="KW-0694">RNA-binding</keyword>
<keyword id="KW-0699">rRNA-binding</keyword>
<name>RS14_ACTP2</name>
<sequence length="101" mass="11592">MAKQSMIARDVKRAKLADKFYAKREELKKIISDANSSDEDRWAAVLKLQTLPRDSSPSRQRNRCRQTGRPHGVLRKFGLSRIKVREAAMRGEIPGLKKASW</sequence>
<proteinExistence type="inferred from homology"/>
<comment type="function">
    <text evidence="1">Binds 16S rRNA, required for the assembly of 30S particles and may also be responsible for determining the conformation of the 16S rRNA at the A site.</text>
</comment>
<comment type="subunit">
    <text evidence="1">Part of the 30S ribosomal subunit. Contacts proteins S3 and S10.</text>
</comment>
<comment type="similarity">
    <text evidence="1">Belongs to the universal ribosomal protein uS14 family.</text>
</comment>